<feature type="chain" id="PRO_0000199473" description="Agamous-like MADS-box protein AGL14">
    <location>
        <begin position="1"/>
        <end position="221"/>
    </location>
</feature>
<feature type="domain" description="MADS-box" evidence="1">
    <location>
        <begin position="3"/>
        <end position="57"/>
    </location>
</feature>
<feature type="domain" description="K-box" evidence="2">
    <location>
        <begin position="87"/>
        <end position="177"/>
    </location>
</feature>
<feature type="sequence conflict" description="In Ref. 4; AAC49082." evidence="10" ref="4">
    <original>H</original>
    <variation>D</variation>
    <location>
        <position position="103"/>
    </location>
</feature>
<feature type="sequence conflict" description="In Ref. 4; AAC49082." evidence="10" ref="4">
    <original>ST</original>
    <variation>TS</variation>
    <location>
        <begin position="187"/>
        <end position="188"/>
    </location>
</feature>
<organism>
    <name type="scientific">Arabidopsis thaliana</name>
    <name type="common">Mouse-ear cress</name>
    <dbReference type="NCBI Taxonomy" id="3702"/>
    <lineage>
        <taxon>Eukaryota</taxon>
        <taxon>Viridiplantae</taxon>
        <taxon>Streptophyta</taxon>
        <taxon>Embryophyta</taxon>
        <taxon>Tracheophyta</taxon>
        <taxon>Spermatophyta</taxon>
        <taxon>Magnoliopsida</taxon>
        <taxon>eudicotyledons</taxon>
        <taxon>Gunneridae</taxon>
        <taxon>Pentapetalae</taxon>
        <taxon>rosids</taxon>
        <taxon>malvids</taxon>
        <taxon>Brassicales</taxon>
        <taxon>Brassicaceae</taxon>
        <taxon>Camelineae</taxon>
        <taxon>Arabidopsis</taxon>
    </lineage>
</organism>
<keyword id="KW-0010">Activator</keyword>
<keyword id="KW-0238">DNA-binding</keyword>
<keyword id="KW-0287">Flowering</keyword>
<keyword id="KW-0341">Growth regulation</keyword>
<keyword id="KW-0539">Nucleus</keyword>
<keyword id="KW-1185">Reference proteome</keyword>
<keyword id="KW-0804">Transcription</keyword>
<keyword id="KW-0805">Transcription regulation</keyword>
<name>AGL14_ARATH</name>
<evidence type="ECO:0000255" key="1">
    <source>
        <dbReference type="PROSITE-ProRule" id="PRU00251"/>
    </source>
</evidence>
<evidence type="ECO:0000255" key="2">
    <source>
        <dbReference type="PROSITE-ProRule" id="PRU00629"/>
    </source>
</evidence>
<evidence type="ECO:0000269" key="3">
    <source>
    </source>
</evidence>
<evidence type="ECO:0000269" key="4">
    <source>
    </source>
</evidence>
<evidence type="ECO:0000269" key="5">
    <source>
    </source>
</evidence>
<evidence type="ECO:0000269" key="6">
    <source>
    </source>
</evidence>
<evidence type="ECO:0000269" key="7">
    <source>
    </source>
</evidence>
<evidence type="ECO:0000303" key="8">
    <source>
    </source>
</evidence>
<evidence type="ECO:0000303" key="9">
    <source>
    </source>
</evidence>
<evidence type="ECO:0000305" key="10"/>
<evidence type="ECO:0000312" key="11">
    <source>
        <dbReference type="Araport" id="AT4G11880"/>
    </source>
</evidence>
<comment type="function">
    <text evidence="5">Transcriptional activator that regulates root development by controlling meristem size and patterning of the root apical meristem. Regulates auxin transport and gradients in the root meristematic cells via direct regulation of the auxin efflux carrier PIN1 and PIN4 gene expression. Binds specifically to the CArG-box DNA sequences in the promoter regions of PIN1 and PIN4 genes (PubMed:24121311). Involved in the regulation of shoot apical meristem (SAM) cell identities and transitions. Promotes flowering transition and participates in flower meristem maintenance and determinacy. Positively regulates TFL1 and WUS expression. Binds directly to the TFL1 regulatory sequences (PubMed:25636918).</text>
</comment>
<comment type="subunit">
    <text evidence="4">Interacts with AGL16.</text>
</comment>
<comment type="interaction">
    <interactant intactId="EBI-622067">
        <id>Q38838</id>
    </interactant>
    <interactant intactId="EBI-592083">
        <id>O82794</id>
        <label>AGL24</label>
    </interactant>
    <organismsDiffer>false</organismsDiffer>
    <experiments>6</experiments>
</comment>
<comment type="interaction">
    <interactant intactId="EBI-622067">
        <id>Q38838</id>
    </interactant>
    <interactant intactId="EBI-592058">
        <id>Q9FVC1</id>
        <label>SVP</label>
    </interactant>
    <organismsDiffer>false</organismsDiffer>
    <experiments>4</experiments>
</comment>
<comment type="subcellular location">
    <subcellularLocation>
        <location evidence="1">Nucleus</location>
    </subcellularLocation>
</comment>
<comment type="tissue specificity">
    <text evidence="3 5 7">Preferentially expressed in roots (PubMed:7549482). Expressed in lateral root cap, root epidermis, root endodermis, columella of the root meristematic region, the vascular cylinder in differentiated zones of the primary root and in emerged lateral root primordia (PubMed:24121311). Expressed in pollen (PubMed:12949148).</text>
</comment>
<comment type="developmental stage">
    <text evidence="6">During floral transition, expressed very early at the flanks of the inflorescence meristem in the anlagens upon the transition to flowering Subsequently, expression levels increase in the first and second stages of the floral meristem and at stage 3, expression is restricted to the L1 and L2 layers. Later on, expressed in the gynoecium and stamen primordia at stage 6.</text>
</comment>
<comment type="induction">
    <text evidence="5">By auxin.</text>
</comment>
<comment type="disruption phenotype">
    <text evidence="5 6">Retarded root growth, and altered root meristem size and stem-cell patterning (PubMed:24121311). Late flowering phenotype (PubMed:25636918).</text>
</comment>
<comment type="miscellaneous">
    <text evidence="9">XAANTAL is the Mayan word for 'go slower' in recognition of the retarded root growth phenotypes of xaantal mutants.</text>
</comment>
<comment type="miscellaneous">
    <text evidence="6">Plants over-expressing AGL14/XAL2 show early flowering phenotype and flowers have vegetative traits.</text>
</comment>
<dbReference type="EMBL" id="AL078606">
    <property type="protein sequence ID" value="CAB44326.1"/>
    <property type="molecule type" value="Genomic_DNA"/>
</dbReference>
<dbReference type="EMBL" id="AL161532">
    <property type="protein sequence ID" value="CAB78231.1"/>
    <property type="molecule type" value="Genomic_DNA"/>
</dbReference>
<dbReference type="EMBL" id="CP002687">
    <property type="protein sequence ID" value="AEE83062.1"/>
    <property type="molecule type" value="Genomic_DNA"/>
</dbReference>
<dbReference type="EMBL" id="CP002687">
    <property type="protein sequence ID" value="ANM67706.1"/>
    <property type="molecule type" value="Genomic_DNA"/>
</dbReference>
<dbReference type="EMBL" id="AK230464">
    <property type="protein sequence ID" value="BAF02258.1"/>
    <property type="molecule type" value="mRNA"/>
</dbReference>
<dbReference type="EMBL" id="U20184">
    <property type="protein sequence ID" value="AAC49082.1"/>
    <property type="molecule type" value="mRNA"/>
</dbReference>
<dbReference type="PIR" id="T09347">
    <property type="entry name" value="T09347"/>
</dbReference>
<dbReference type="RefSeq" id="NP_001319907.1">
    <property type="nucleotide sequence ID" value="NM_001340739.1"/>
</dbReference>
<dbReference type="RefSeq" id="NP_192925.1">
    <property type="nucleotide sequence ID" value="NM_117258.5"/>
</dbReference>
<dbReference type="SMR" id="Q38838"/>
<dbReference type="BioGRID" id="12093">
    <property type="interactions" value="9"/>
</dbReference>
<dbReference type="DIP" id="DIP-33798N"/>
<dbReference type="FunCoup" id="Q38838">
    <property type="interactions" value="29"/>
</dbReference>
<dbReference type="IntAct" id="Q38838">
    <property type="interactions" value="19"/>
</dbReference>
<dbReference type="STRING" id="3702.Q38838"/>
<dbReference type="PaxDb" id="3702-AT4G11880.1"/>
<dbReference type="EnsemblPlants" id="AT4G11880.1">
    <property type="protein sequence ID" value="AT4G11880.1"/>
    <property type="gene ID" value="AT4G11880"/>
</dbReference>
<dbReference type="EnsemblPlants" id="AT4G11880.4">
    <property type="protein sequence ID" value="AT4G11880.4"/>
    <property type="gene ID" value="AT4G11880"/>
</dbReference>
<dbReference type="GeneID" id="826795"/>
<dbReference type="Gramene" id="AT4G11880.1">
    <property type="protein sequence ID" value="AT4G11880.1"/>
    <property type="gene ID" value="AT4G11880"/>
</dbReference>
<dbReference type="Gramene" id="AT4G11880.4">
    <property type="protein sequence ID" value="AT4G11880.4"/>
    <property type="gene ID" value="AT4G11880"/>
</dbReference>
<dbReference type="KEGG" id="ath:AT4G11880"/>
<dbReference type="Araport" id="AT4G11880"/>
<dbReference type="TAIR" id="AT4G11880">
    <property type="gene designation" value="AGL14"/>
</dbReference>
<dbReference type="eggNOG" id="KOG0014">
    <property type="taxonomic scope" value="Eukaryota"/>
</dbReference>
<dbReference type="HOGENOM" id="CLU_053053_0_4_1"/>
<dbReference type="InParanoid" id="Q38838"/>
<dbReference type="OMA" id="IHENTQI"/>
<dbReference type="PhylomeDB" id="Q38838"/>
<dbReference type="PRO" id="PR:Q38838"/>
<dbReference type="Proteomes" id="UP000006548">
    <property type="component" value="Chromosome 4"/>
</dbReference>
<dbReference type="ExpressionAtlas" id="Q38838">
    <property type="expression patterns" value="baseline and differential"/>
</dbReference>
<dbReference type="GO" id="GO:0005737">
    <property type="term" value="C:cytoplasm"/>
    <property type="evidence" value="ECO:0000314"/>
    <property type="project" value="UniProtKB"/>
</dbReference>
<dbReference type="GO" id="GO:0005634">
    <property type="term" value="C:nucleus"/>
    <property type="evidence" value="ECO:0000314"/>
    <property type="project" value="UniProtKB"/>
</dbReference>
<dbReference type="GO" id="GO:0003700">
    <property type="term" value="F:DNA-binding transcription factor activity"/>
    <property type="evidence" value="ECO:0000314"/>
    <property type="project" value="UniProtKB"/>
</dbReference>
<dbReference type="GO" id="GO:0046983">
    <property type="term" value="F:protein dimerization activity"/>
    <property type="evidence" value="ECO:0007669"/>
    <property type="project" value="InterPro"/>
</dbReference>
<dbReference type="GO" id="GO:0000977">
    <property type="term" value="F:RNA polymerase II transcription regulatory region sequence-specific DNA binding"/>
    <property type="evidence" value="ECO:0007669"/>
    <property type="project" value="InterPro"/>
</dbReference>
<dbReference type="GO" id="GO:0000976">
    <property type="term" value="F:transcription cis-regulatory region binding"/>
    <property type="evidence" value="ECO:0000314"/>
    <property type="project" value="UniProtKB"/>
</dbReference>
<dbReference type="GO" id="GO:0009908">
    <property type="term" value="P:flower development"/>
    <property type="evidence" value="ECO:0007669"/>
    <property type="project" value="UniProtKB-KW"/>
</dbReference>
<dbReference type="GO" id="GO:0010076">
    <property type="term" value="P:maintenance of floral meristem identity"/>
    <property type="evidence" value="ECO:0000315"/>
    <property type="project" value="UniProtKB"/>
</dbReference>
<dbReference type="GO" id="GO:0045944">
    <property type="term" value="P:positive regulation of transcription by RNA polymerase II"/>
    <property type="evidence" value="ECO:0007669"/>
    <property type="project" value="InterPro"/>
</dbReference>
<dbReference type="GO" id="GO:2000012">
    <property type="term" value="P:regulation of auxin polar transport"/>
    <property type="evidence" value="ECO:0000315"/>
    <property type="project" value="UniProtKB"/>
</dbReference>
<dbReference type="GO" id="GO:0010082">
    <property type="term" value="P:regulation of root meristem growth"/>
    <property type="evidence" value="ECO:0000315"/>
    <property type="project" value="UniProtKB"/>
</dbReference>
<dbReference type="GO" id="GO:0010228">
    <property type="term" value="P:vegetative to reproductive phase transition of meristem"/>
    <property type="evidence" value="ECO:0000315"/>
    <property type="project" value="UniProtKB"/>
</dbReference>
<dbReference type="CDD" id="cd00265">
    <property type="entry name" value="MADS_MEF2_like"/>
    <property type="match status" value="1"/>
</dbReference>
<dbReference type="FunFam" id="3.40.1810.10:FF:000012">
    <property type="entry name" value="MADS-box protein SOC1"/>
    <property type="match status" value="1"/>
</dbReference>
<dbReference type="Gene3D" id="3.40.1810.10">
    <property type="entry name" value="Transcription factor, MADS-box"/>
    <property type="match status" value="1"/>
</dbReference>
<dbReference type="InterPro" id="IPR050142">
    <property type="entry name" value="MADS-box/MEF2_TF"/>
</dbReference>
<dbReference type="InterPro" id="IPR033896">
    <property type="entry name" value="MEF2-like_N"/>
</dbReference>
<dbReference type="InterPro" id="IPR002487">
    <property type="entry name" value="TF_Kbox"/>
</dbReference>
<dbReference type="InterPro" id="IPR002100">
    <property type="entry name" value="TF_MADSbox"/>
</dbReference>
<dbReference type="InterPro" id="IPR036879">
    <property type="entry name" value="TF_MADSbox_sf"/>
</dbReference>
<dbReference type="PANTHER" id="PTHR48019">
    <property type="entry name" value="SERUM RESPONSE FACTOR HOMOLOG"/>
    <property type="match status" value="1"/>
</dbReference>
<dbReference type="Pfam" id="PF01486">
    <property type="entry name" value="K-box"/>
    <property type="match status" value="1"/>
</dbReference>
<dbReference type="Pfam" id="PF00319">
    <property type="entry name" value="SRF-TF"/>
    <property type="match status" value="1"/>
</dbReference>
<dbReference type="PRINTS" id="PR00404">
    <property type="entry name" value="MADSDOMAIN"/>
</dbReference>
<dbReference type="SMART" id="SM00432">
    <property type="entry name" value="MADS"/>
    <property type="match status" value="1"/>
</dbReference>
<dbReference type="SUPFAM" id="SSF55455">
    <property type="entry name" value="SRF-like"/>
    <property type="match status" value="1"/>
</dbReference>
<dbReference type="PROSITE" id="PS51297">
    <property type="entry name" value="K_BOX"/>
    <property type="match status" value="1"/>
</dbReference>
<dbReference type="PROSITE" id="PS00350">
    <property type="entry name" value="MADS_BOX_1"/>
    <property type="match status" value="1"/>
</dbReference>
<dbReference type="PROSITE" id="PS50066">
    <property type="entry name" value="MADS_BOX_2"/>
    <property type="match status" value="1"/>
</dbReference>
<sequence length="221" mass="25492">MVRGKTEMKRIENATSRQVTFSKRRNGLLKKAFELSVLCDAEVALIIFSPRGKLYEFSSSSSIPKTVERYQKRIQDLGSNHKRNDNSQQSKDETYGLARKIEHLEISTRKMMGEGLDASSIEELQQLENQLDRSLMKIRAKKYQLLREETEKLKEKERNLIAENKMLMEKCEMQGRGIIGRISSSSSTSELDIDDNEMEVVTDLFIGPPETRHFKKFPPSN</sequence>
<accession>Q38838</accession>
<accession>Q0WKU9</accession>
<accession>Q9T056</accession>
<gene>
    <name evidence="8" type="primary">AGL14</name>
    <name evidence="9" type="synonym">XAL2</name>
    <name evidence="11" type="ordered locus">At4g11880</name>
    <name type="ORF">T26M18.90</name>
</gene>
<reference key="1">
    <citation type="journal article" date="1999" name="Nature">
        <title>Sequence and analysis of chromosome 4 of the plant Arabidopsis thaliana.</title>
        <authorList>
            <person name="Mayer K.F.X."/>
            <person name="Schueller C."/>
            <person name="Wambutt R."/>
            <person name="Murphy G."/>
            <person name="Volckaert G."/>
            <person name="Pohl T."/>
            <person name="Duesterhoeft A."/>
            <person name="Stiekema W."/>
            <person name="Entian K.-D."/>
            <person name="Terryn N."/>
            <person name="Harris B."/>
            <person name="Ansorge W."/>
            <person name="Brandt P."/>
            <person name="Grivell L.A."/>
            <person name="Rieger M."/>
            <person name="Weichselgartner M."/>
            <person name="de Simone V."/>
            <person name="Obermaier B."/>
            <person name="Mache R."/>
            <person name="Mueller M."/>
            <person name="Kreis M."/>
            <person name="Delseny M."/>
            <person name="Puigdomenech P."/>
            <person name="Watson M."/>
            <person name="Schmidtheini T."/>
            <person name="Reichert B."/>
            <person name="Portetelle D."/>
            <person name="Perez-Alonso M."/>
            <person name="Boutry M."/>
            <person name="Bancroft I."/>
            <person name="Vos P."/>
            <person name="Hoheisel J."/>
            <person name="Zimmermann W."/>
            <person name="Wedler H."/>
            <person name="Ridley P."/>
            <person name="Langham S.-A."/>
            <person name="McCullagh B."/>
            <person name="Bilham L."/>
            <person name="Robben J."/>
            <person name="van der Schueren J."/>
            <person name="Grymonprez B."/>
            <person name="Chuang Y.-J."/>
            <person name="Vandenbussche F."/>
            <person name="Braeken M."/>
            <person name="Weltjens I."/>
            <person name="Voet M."/>
            <person name="Bastiaens I."/>
            <person name="Aert R."/>
            <person name="Defoor E."/>
            <person name="Weitzenegger T."/>
            <person name="Bothe G."/>
            <person name="Ramsperger U."/>
            <person name="Hilbert H."/>
            <person name="Braun M."/>
            <person name="Holzer E."/>
            <person name="Brandt A."/>
            <person name="Peters S."/>
            <person name="van Staveren M."/>
            <person name="Dirkse W."/>
            <person name="Mooijman P."/>
            <person name="Klein Lankhorst R."/>
            <person name="Rose M."/>
            <person name="Hauf J."/>
            <person name="Koetter P."/>
            <person name="Berneiser S."/>
            <person name="Hempel S."/>
            <person name="Feldpausch M."/>
            <person name="Lamberth S."/>
            <person name="Van den Daele H."/>
            <person name="De Keyser A."/>
            <person name="Buysshaert C."/>
            <person name="Gielen J."/>
            <person name="Villarroel R."/>
            <person name="De Clercq R."/>
            <person name="van Montagu M."/>
            <person name="Rogers J."/>
            <person name="Cronin A."/>
            <person name="Quail M.A."/>
            <person name="Bray-Allen S."/>
            <person name="Clark L."/>
            <person name="Doggett J."/>
            <person name="Hall S."/>
            <person name="Kay M."/>
            <person name="Lennard N."/>
            <person name="McLay K."/>
            <person name="Mayes R."/>
            <person name="Pettett A."/>
            <person name="Rajandream M.A."/>
            <person name="Lyne M."/>
            <person name="Benes V."/>
            <person name="Rechmann S."/>
            <person name="Borkova D."/>
            <person name="Bloecker H."/>
            <person name="Scharfe M."/>
            <person name="Grimm M."/>
            <person name="Loehnert T.-H."/>
            <person name="Dose S."/>
            <person name="de Haan M."/>
            <person name="Maarse A.C."/>
            <person name="Schaefer M."/>
            <person name="Mueller-Auer S."/>
            <person name="Gabel C."/>
            <person name="Fuchs M."/>
            <person name="Fartmann B."/>
            <person name="Granderath K."/>
            <person name="Dauner D."/>
            <person name="Herzl A."/>
            <person name="Neumann S."/>
            <person name="Argiriou A."/>
            <person name="Vitale D."/>
            <person name="Liguori R."/>
            <person name="Piravandi E."/>
            <person name="Massenet O."/>
            <person name="Quigley F."/>
            <person name="Clabauld G."/>
            <person name="Muendlein A."/>
            <person name="Felber R."/>
            <person name="Schnabl S."/>
            <person name="Hiller R."/>
            <person name="Schmidt W."/>
            <person name="Lecharny A."/>
            <person name="Aubourg S."/>
            <person name="Chefdor F."/>
            <person name="Cooke R."/>
            <person name="Berger C."/>
            <person name="Monfort A."/>
            <person name="Casacuberta E."/>
            <person name="Gibbons T."/>
            <person name="Weber N."/>
            <person name="Vandenbol M."/>
            <person name="Bargues M."/>
            <person name="Terol J."/>
            <person name="Torres A."/>
            <person name="Perez-Perez A."/>
            <person name="Purnelle B."/>
            <person name="Bent E."/>
            <person name="Johnson S."/>
            <person name="Tacon D."/>
            <person name="Jesse T."/>
            <person name="Heijnen L."/>
            <person name="Schwarz S."/>
            <person name="Scholler P."/>
            <person name="Heber S."/>
            <person name="Francs P."/>
            <person name="Bielke C."/>
            <person name="Frishman D."/>
            <person name="Haase D."/>
            <person name="Lemcke K."/>
            <person name="Mewes H.-W."/>
            <person name="Stocker S."/>
            <person name="Zaccaria P."/>
            <person name="Bevan M."/>
            <person name="Wilson R.K."/>
            <person name="de la Bastide M."/>
            <person name="Habermann K."/>
            <person name="Parnell L."/>
            <person name="Dedhia N."/>
            <person name="Gnoj L."/>
            <person name="Schutz K."/>
            <person name="Huang E."/>
            <person name="Spiegel L."/>
            <person name="Sekhon M."/>
            <person name="Murray J."/>
            <person name="Sheet P."/>
            <person name="Cordes M."/>
            <person name="Abu-Threideh J."/>
            <person name="Stoneking T."/>
            <person name="Kalicki J."/>
            <person name="Graves T."/>
            <person name="Harmon G."/>
            <person name="Edwards J."/>
            <person name="Latreille P."/>
            <person name="Courtney L."/>
            <person name="Cloud J."/>
            <person name="Abbott A."/>
            <person name="Scott K."/>
            <person name="Johnson D."/>
            <person name="Minx P."/>
            <person name="Bentley D."/>
            <person name="Fulton B."/>
            <person name="Miller N."/>
            <person name="Greco T."/>
            <person name="Kemp K."/>
            <person name="Kramer J."/>
            <person name="Fulton L."/>
            <person name="Mardis E."/>
            <person name="Dante M."/>
            <person name="Pepin K."/>
            <person name="Hillier L.W."/>
            <person name="Nelson J."/>
            <person name="Spieth J."/>
            <person name="Ryan E."/>
            <person name="Andrews S."/>
            <person name="Geisel C."/>
            <person name="Layman D."/>
            <person name="Du H."/>
            <person name="Ali J."/>
            <person name="Berghoff A."/>
            <person name="Jones K."/>
            <person name="Drone K."/>
            <person name="Cotton M."/>
            <person name="Joshu C."/>
            <person name="Antonoiu B."/>
            <person name="Zidanic M."/>
            <person name="Strong C."/>
            <person name="Sun H."/>
            <person name="Lamar B."/>
            <person name="Yordan C."/>
            <person name="Ma P."/>
            <person name="Zhong J."/>
            <person name="Preston R."/>
            <person name="Vil D."/>
            <person name="Shekher M."/>
            <person name="Matero A."/>
            <person name="Shah R."/>
            <person name="Swaby I.K."/>
            <person name="O'Shaughnessy A."/>
            <person name="Rodriguez M."/>
            <person name="Hoffman J."/>
            <person name="Till S."/>
            <person name="Granat S."/>
            <person name="Shohdy N."/>
            <person name="Hasegawa A."/>
            <person name="Hameed A."/>
            <person name="Lodhi M."/>
            <person name="Johnson A."/>
            <person name="Chen E."/>
            <person name="Marra M.A."/>
            <person name="Martienssen R."/>
            <person name="McCombie W.R."/>
        </authorList>
    </citation>
    <scope>NUCLEOTIDE SEQUENCE [LARGE SCALE GENOMIC DNA]</scope>
    <source>
        <strain>cv. Columbia</strain>
    </source>
</reference>
<reference key="2">
    <citation type="journal article" date="2017" name="Plant J.">
        <title>Araport11: a complete reannotation of the Arabidopsis thaliana reference genome.</title>
        <authorList>
            <person name="Cheng C.Y."/>
            <person name="Krishnakumar V."/>
            <person name="Chan A.P."/>
            <person name="Thibaud-Nissen F."/>
            <person name="Schobel S."/>
            <person name="Town C.D."/>
        </authorList>
    </citation>
    <scope>GENOME REANNOTATION</scope>
    <source>
        <strain>cv. Columbia</strain>
    </source>
</reference>
<reference key="3">
    <citation type="submission" date="2006-07" db="EMBL/GenBank/DDBJ databases">
        <title>Large-scale analysis of RIKEN Arabidopsis full-length (RAFL) cDNAs.</title>
        <authorList>
            <person name="Totoki Y."/>
            <person name="Seki M."/>
            <person name="Ishida J."/>
            <person name="Nakajima M."/>
            <person name="Enju A."/>
            <person name="Kamiya A."/>
            <person name="Narusaka M."/>
            <person name="Shin-i T."/>
            <person name="Nakagawa M."/>
            <person name="Sakamoto N."/>
            <person name="Oishi K."/>
            <person name="Kohara Y."/>
            <person name="Kobayashi M."/>
            <person name="Toyoda A."/>
            <person name="Sakaki Y."/>
            <person name="Sakurai T."/>
            <person name="Iida K."/>
            <person name="Akiyama K."/>
            <person name="Satou M."/>
            <person name="Toyoda T."/>
            <person name="Konagaya A."/>
            <person name="Carninci P."/>
            <person name="Kawai J."/>
            <person name="Hayashizaki Y."/>
            <person name="Shinozaki K."/>
        </authorList>
    </citation>
    <scope>NUCLEOTIDE SEQUENCE [LARGE SCALE MRNA]</scope>
    <source>
        <strain>cv. Columbia</strain>
    </source>
</reference>
<reference key="4">
    <citation type="journal article" date="1995" name="Plant Cell">
        <title>Diverse roles for MADS box genes in Arabidopsis development.</title>
        <authorList>
            <person name="Rounsley S.D."/>
            <person name="Ditta G.S."/>
            <person name="Yanofsky M.F."/>
        </authorList>
    </citation>
    <scope>NUCLEOTIDE SEQUENCE [MRNA] OF 7-221</scope>
    <scope>TISSUE SPECIFICITY</scope>
    <source>
        <strain>cv. Landsberg erecta</strain>
        <tissue>Root</tissue>
    </source>
</reference>
<reference key="5">
    <citation type="journal article" date="2003" name="Mol. Biol. Evol.">
        <title>Evolution and divergence of the MADS-box gene family based on genome-wide expression analyses.</title>
        <authorList>
            <person name="Kofuji R."/>
            <person name="Sumikawa N."/>
            <person name="Yamasaki M."/>
            <person name="Kondo K."/>
            <person name="Ueda K."/>
            <person name="Ito M."/>
            <person name="Hasebe M."/>
        </authorList>
    </citation>
    <scope>TISSUE SPECIFICITY</scope>
</reference>
<reference key="6">
    <citation type="journal article" date="2003" name="Plant Cell">
        <title>Molecular and phylogenetic analyses of the complete MADS-box transcription factor family in Arabidopsis: new openings to the MADS world.</title>
        <authorList>
            <person name="Parenicova L."/>
            <person name="de Folter S."/>
            <person name="Kieffer M."/>
            <person name="Horner D.S."/>
            <person name="Favalli C."/>
            <person name="Busscher J."/>
            <person name="Cook H.E."/>
            <person name="Ingram R.M."/>
            <person name="Kater M.M."/>
            <person name="Davies B."/>
            <person name="Angenent G.C."/>
            <person name="Colombo L."/>
        </authorList>
    </citation>
    <scope>GENE FAMILY</scope>
    <scope>NOMENCLATURE</scope>
</reference>
<reference key="7">
    <citation type="journal article" date="2005" name="Plant Cell">
        <title>Comprehensive interaction map of the Arabidopsis MADS Box transcription factors.</title>
        <authorList>
            <person name="de Folter S."/>
            <person name="Immink R.G.H."/>
            <person name="Kieffer M."/>
            <person name="Parenicova L."/>
            <person name="Henz S.R."/>
            <person name="Weigel D."/>
            <person name="Busscher M."/>
            <person name="Kooiker M."/>
            <person name="Colombo L."/>
            <person name="Kater M.M."/>
            <person name="Davies B."/>
            <person name="Angenent G.C."/>
        </authorList>
    </citation>
    <scope>INTERACTION WITH AGL16</scope>
</reference>
<reference key="8">
    <citation type="journal article" date="2013" name="EMBO J.">
        <title>The MADS transcription factor XAL2/AGL14 modulates auxin transport during Arabidopsis root development by regulating PIN expression.</title>
        <authorList>
            <person name="Garay-Arroyo A."/>
            <person name="Ortiz-Moreno E."/>
            <person name="de la Paz Sanchez M."/>
            <person name="Murphy A.S."/>
            <person name="Garcia-Ponce B."/>
            <person name="Marsch-Martinez N."/>
            <person name="de Folter S."/>
            <person name="Corvera-Poire A."/>
            <person name="Jaimes-Miranda F."/>
            <person name="Pacheco-Escobedo M.A."/>
            <person name="Dubrovsky J.G."/>
            <person name="Pelaz S."/>
            <person name="Alvarez-Buylla E.R."/>
        </authorList>
    </citation>
    <scope>FUNCTION</scope>
    <scope>TISSUE SPECIFICITY</scope>
    <scope>INDUCTION BY AUXIN</scope>
    <scope>DISRUPTION PHENOTYPE</scope>
</reference>
<reference key="9">
    <citation type="journal article" date="2015" name="Mol. Plant">
        <title>XAANTAL2 (AGL14) is an important component of the complex gene regulatory network that underlies Arabidopsis shoot apical meristem transitions.</title>
        <authorList>
            <person name="Perez-Ruiz R.V."/>
            <person name="Garcia-Ponce B."/>
            <person name="Marsch-Martinez N."/>
            <person name="Ugartechea-Chirino Y."/>
            <person name="Villajuana-Bonequi M."/>
            <person name="de Folter S."/>
            <person name="Azpeitia E."/>
            <person name="Davila-Velderrain J."/>
            <person name="Cruz-Sanchez D."/>
            <person name="Garay-Arroyo A."/>
            <person name="de la Paz Sanchez M."/>
            <person name="Estevez-Palmas J.M."/>
            <person name="Alvarez-Buylla E.R."/>
        </authorList>
    </citation>
    <scope>FUNCTION</scope>
    <scope>DEVELOPMENTAL STAGE</scope>
    <scope>DISRUPTION PHENOTYPE</scope>
</reference>
<proteinExistence type="evidence at protein level"/>
<protein>
    <recommendedName>
        <fullName evidence="10">Agamous-like MADS-box protein AGL14</fullName>
    </recommendedName>
    <alternativeName>
        <fullName evidence="9">Protein XAANTAL 2</fullName>
    </alternativeName>
</protein>